<geneLocation type="chloroplast"/>
<gene>
    <name evidence="1" type="primary">rpl16</name>
</gene>
<accession>A4QJN6</accession>
<organism>
    <name type="scientific">Aethionema grandiflorum</name>
    <name type="common">Persian stone-cress</name>
    <dbReference type="NCBI Taxonomy" id="72657"/>
    <lineage>
        <taxon>Eukaryota</taxon>
        <taxon>Viridiplantae</taxon>
        <taxon>Streptophyta</taxon>
        <taxon>Embryophyta</taxon>
        <taxon>Tracheophyta</taxon>
        <taxon>Spermatophyta</taxon>
        <taxon>Magnoliopsida</taxon>
        <taxon>eudicotyledons</taxon>
        <taxon>Gunneridae</taxon>
        <taxon>Pentapetalae</taxon>
        <taxon>rosids</taxon>
        <taxon>malvids</taxon>
        <taxon>Brassicales</taxon>
        <taxon>Brassicaceae</taxon>
        <taxon>Aethionemeae</taxon>
        <taxon>Aethionema</taxon>
    </lineage>
</organism>
<reference key="1">
    <citation type="submission" date="2007-03" db="EMBL/GenBank/DDBJ databases">
        <title>Sequencing analysis of Aethionema grandiflorum chloroplast DNA.</title>
        <authorList>
            <person name="Hosouchi T."/>
            <person name="Tsuruoka H."/>
            <person name="Kotani H."/>
        </authorList>
    </citation>
    <scope>NUCLEOTIDE SEQUENCE [LARGE SCALE GENOMIC DNA]</scope>
</reference>
<sequence>MLSPKRTRFRKQHRGRLKGISYRGNRICFGRYALQTLEPAWITSRQIEAGRRAMTRNVRRGGKIWVRIFPDKPVTVRPAETRMGSGKGSPEYWVAVVKPGKILYEMGGVPENIARKAISIAASKMPIKTQFIISE</sequence>
<evidence type="ECO:0000255" key="1">
    <source>
        <dbReference type="HAMAP-Rule" id="MF_01342"/>
    </source>
</evidence>
<evidence type="ECO:0000305" key="2"/>
<name>RK16_AETGR</name>
<feature type="chain" id="PRO_0000354612" description="Large ribosomal subunit protein uL16c">
    <location>
        <begin position="1"/>
        <end position="135"/>
    </location>
</feature>
<keyword id="KW-0150">Chloroplast</keyword>
<keyword id="KW-0934">Plastid</keyword>
<keyword id="KW-0687">Ribonucleoprotein</keyword>
<keyword id="KW-0689">Ribosomal protein</keyword>
<proteinExistence type="inferred from homology"/>
<dbReference type="EMBL" id="AP009367">
    <property type="protein sequence ID" value="BAF49891.1"/>
    <property type="molecule type" value="Genomic_DNA"/>
</dbReference>
<dbReference type="RefSeq" id="YP_001123067.1">
    <property type="nucleotide sequence ID" value="NC_009266.1"/>
</dbReference>
<dbReference type="SMR" id="A4QJN6"/>
<dbReference type="GeneID" id="4962285"/>
<dbReference type="GO" id="GO:0009507">
    <property type="term" value="C:chloroplast"/>
    <property type="evidence" value="ECO:0007669"/>
    <property type="project" value="UniProtKB-SubCell"/>
</dbReference>
<dbReference type="GO" id="GO:0005762">
    <property type="term" value="C:mitochondrial large ribosomal subunit"/>
    <property type="evidence" value="ECO:0007669"/>
    <property type="project" value="TreeGrafter"/>
</dbReference>
<dbReference type="GO" id="GO:0019843">
    <property type="term" value="F:rRNA binding"/>
    <property type="evidence" value="ECO:0007669"/>
    <property type="project" value="InterPro"/>
</dbReference>
<dbReference type="GO" id="GO:0003735">
    <property type="term" value="F:structural constituent of ribosome"/>
    <property type="evidence" value="ECO:0007669"/>
    <property type="project" value="InterPro"/>
</dbReference>
<dbReference type="GO" id="GO:0032543">
    <property type="term" value="P:mitochondrial translation"/>
    <property type="evidence" value="ECO:0007669"/>
    <property type="project" value="TreeGrafter"/>
</dbReference>
<dbReference type="CDD" id="cd01433">
    <property type="entry name" value="Ribosomal_L16_L10e"/>
    <property type="match status" value="1"/>
</dbReference>
<dbReference type="FunFam" id="3.90.1170.10:FF:000001">
    <property type="entry name" value="50S ribosomal protein L16"/>
    <property type="match status" value="1"/>
</dbReference>
<dbReference type="Gene3D" id="3.90.1170.10">
    <property type="entry name" value="Ribosomal protein L10e/L16"/>
    <property type="match status" value="1"/>
</dbReference>
<dbReference type="HAMAP" id="MF_01342">
    <property type="entry name" value="Ribosomal_uL16"/>
    <property type="match status" value="1"/>
</dbReference>
<dbReference type="InterPro" id="IPR047873">
    <property type="entry name" value="Ribosomal_uL16"/>
</dbReference>
<dbReference type="InterPro" id="IPR000114">
    <property type="entry name" value="Ribosomal_uL16_bact-type"/>
</dbReference>
<dbReference type="InterPro" id="IPR020798">
    <property type="entry name" value="Ribosomal_uL16_CS"/>
</dbReference>
<dbReference type="InterPro" id="IPR016180">
    <property type="entry name" value="Ribosomal_uL16_dom"/>
</dbReference>
<dbReference type="InterPro" id="IPR036920">
    <property type="entry name" value="Ribosomal_uL16_sf"/>
</dbReference>
<dbReference type="NCBIfam" id="TIGR01164">
    <property type="entry name" value="rplP_bact"/>
    <property type="match status" value="1"/>
</dbReference>
<dbReference type="PANTHER" id="PTHR12220">
    <property type="entry name" value="50S/60S RIBOSOMAL PROTEIN L16"/>
    <property type="match status" value="1"/>
</dbReference>
<dbReference type="PANTHER" id="PTHR12220:SF13">
    <property type="entry name" value="LARGE RIBOSOMAL SUBUNIT PROTEIN UL16M"/>
    <property type="match status" value="1"/>
</dbReference>
<dbReference type="Pfam" id="PF00252">
    <property type="entry name" value="Ribosomal_L16"/>
    <property type="match status" value="1"/>
</dbReference>
<dbReference type="PRINTS" id="PR00060">
    <property type="entry name" value="RIBOSOMALL16"/>
</dbReference>
<dbReference type="SUPFAM" id="SSF54686">
    <property type="entry name" value="Ribosomal protein L16p/L10e"/>
    <property type="match status" value="1"/>
</dbReference>
<dbReference type="PROSITE" id="PS00586">
    <property type="entry name" value="RIBOSOMAL_L16_1"/>
    <property type="match status" value="1"/>
</dbReference>
<dbReference type="PROSITE" id="PS00701">
    <property type="entry name" value="RIBOSOMAL_L16_2"/>
    <property type="match status" value="1"/>
</dbReference>
<protein>
    <recommendedName>
        <fullName evidence="1">Large ribosomal subunit protein uL16c</fullName>
    </recommendedName>
    <alternativeName>
        <fullName evidence="2">50S ribosomal protein L16, chloroplastic</fullName>
    </alternativeName>
</protein>
<comment type="subunit">
    <text evidence="1">Part of the 50S ribosomal subunit.</text>
</comment>
<comment type="subcellular location">
    <subcellularLocation>
        <location>Plastid</location>
        <location>Chloroplast</location>
    </subcellularLocation>
</comment>
<comment type="similarity">
    <text evidence="1">Belongs to the universal ribosomal protein uL16 family.</text>
</comment>